<sequence length="160" mass="18184">MPSFDIQSELNKHEVSNAVDQANREVATRFDFKGSGATYKYEGNSITLQAETDFQLKQMIDILQNKFAKRQIDVAHMKLEDPIIQHKSAQQTVMLLEGIDQTAAKKIIKLIKDQKLKVQAAIQGEKVRVTGKKRDDLQSVIGLLKEQEIGLPLQFDNFRD</sequence>
<feature type="chain" id="PRO_1000130613" description="Nucleotide-binding protein CbuG_1898">
    <location>
        <begin position="1"/>
        <end position="160"/>
    </location>
</feature>
<reference key="1">
    <citation type="journal article" date="2009" name="Infect. Immun.">
        <title>Comparative genomics reveal extensive transposon-mediated genomic plasticity and diversity among potential effector proteins within the genus Coxiella.</title>
        <authorList>
            <person name="Beare P.A."/>
            <person name="Unsworth N."/>
            <person name="Andoh M."/>
            <person name="Voth D.E."/>
            <person name="Omsland A."/>
            <person name="Gilk S.D."/>
            <person name="Williams K.P."/>
            <person name="Sobral B.W."/>
            <person name="Kupko J.J. III"/>
            <person name="Porcella S.F."/>
            <person name="Samuel J.E."/>
            <person name="Heinzen R.A."/>
        </authorList>
    </citation>
    <scope>NUCLEOTIDE SEQUENCE [LARGE SCALE GENOMIC DNA]</scope>
    <source>
        <strain>CbuG_Q212</strain>
    </source>
</reference>
<comment type="function">
    <text evidence="1">Nucleotide-binding protein.</text>
</comment>
<comment type="similarity">
    <text evidence="1">Belongs to the YajQ family.</text>
</comment>
<accession>B6J2R9</accession>
<proteinExistence type="inferred from homology"/>
<protein>
    <recommendedName>
        <fullName evidence="1">Nucleotide-binding protein CbuG_1898</fullName>
    </recommendedName>
</protein>
<organism>
    <name type="scientific">Coxiella burnetii (strain CbuG_Q212)</name>
    <name type="common">Coxiella burnetii (strain Q212)</name>
    <dbReference type="NCBI Taxonomy" id="434923"/>
    <lineage>
        <taxon>Bacteria</taxon>
        <taxon>Pseudomonadati</taxon>
        <taxon>Pseudomonadota</taxon>
        <taxon>Gammaproteobacteria</taxon>
        <taxon>Legionellales</taxon>
        <taxon>Coxiellaceae</taxon>
        <taxon>Coxiella</taxon>
    </lineage>
</organism>
<keyword id="KW-0547">Nucleotide-binding</keyword>
<dbReference type="EMBL" id="CP001019">
    <property type="protein sequence ID" value="ACJ19146.1"/>
    <property type="molecule type" value="Genomic_DNA"/>
</dbReference>
<dbReference type="RefSeq" id="WP_005772268.1">
    <property type="nucleotide sequence ID" value="NC_011527.1"/>
</dbReference>
<dbReference type="SMR" id="B6J2R9"/>
<dbReference type="KEGG" id="cbg:CbuG_1898"/>
<dbReference type="HOGENOM" id="CLU_099839_1_0_6"/>
<dbReference type="GO" id="GO:0005829">
    <property type="term" value="C:cytosol"/>
    <property type="evidence" value="ECO:0007669"/>
    <property type="project" value="TreeGrafter"/>
</dbReference>
<dbReference type="GO" id="GO:0000166">
    <property type="term" value="F:nucleotide binding"/>
    <property type="evidence" value="ECO:0007669"/>
    <property type="project" value="TreeGrafter"/>
</dbReference>
<dbReference type="CDD" id="cd11740">
    <property type="entry name" value="YajQ_like"/>
    <property type="match status" value="1"/>
</dbReference>
<dbReference type="FunFam" id="3.30.70.860:FF:000001">
    <property type="entry name" value="UPF0234 protein YajQ"/>
    <property type="match status" value="1"/>
</dbReference>
<dbReference type="Gene3D" id="3.30.70.860">
    <property type="match status" value="1"/>
</dbReference>
<dbReference type="Gene3D" id="3.30.70.990">
    <property type="entry name" value="YajQ-like, domain 2"/>
    <property type="match status" value="1"/>
</dbReference>
<dbReference type="HAMAP" id="MF_00632">
    <property type="entry name" value="YajQ"/>
    <property type="match status" value="1"/>
</dbReference>
<dbReference type="InterPro" id="IPR007551">
    <property type="entry name" value="DUF520"/>
</dbReference>
<dbReference type="InterPro" id="IPR035571">
    <property type="entry name" value="UPF0234-like_C"/>
</dbReference>
<dbReference type="InterPro" id="IPR035570">
    <property type="entry name" value="UPF0234_N"/>
</dbReference>
<dbReference type="InterPro" id="IPR036183">
    <property type="entry name" value="YajQ-like_sf"/>
</dbReference>
<dbReference type="NCBIfam" id="NF003819">
    <property type="entry name" value="PRK05412.1"/>
    <property type="match status" value="1"/>
</dbReference>
<dbReference type="PANTHER" id="PTHR30476">
    <property type="entry name" value="UPF0234 PROTEIN YAJQ"/>
    <property type="match status" value="1"/>
</dbReference>
<dbReference type="PANTHER" id="PTHR30476:SF0">
    <property type="entry name" value="UPF0234 PROTEIN YAJQ"/>
    <property type="match status" value="1"/>
</dbReference>
<dbReference type="Pfam" id="PF04461">
    <property type="entry name" value="DUF520"/>
    <property type="match status" value="1"/>
</dbReference>
<dbReference type="SUPFAM" id="SSF89963">
    <property type="entry name" value="YajQ-like"/>
    <property type="match status" value="2"/>
</dbReference>
<gene>
    <name type="ordered locus">CbuG_1898</name>
</gene>
<name>Y1898_COXB2</name>
<evidence type="ECO:0000255" key="1">
    <source>
        <dbReference type="HAMAP-Rule" id="MF_00632"/>
    </source>
</evidence>